<name>CBPS1_DICDI</name>
<comment type="cofactor">
    <cofactor evidence="1">
        <name>Zn(2+)</name>
        <dbReference type="ChEBI" id="CHEBI:29105"/>
    </cofactor>
    <text evidence="1">Binds 2 Zn(2+) ions per subunit.</text>
</comment>
<comment type="subcellular location">
    <subcellularLocation>
        <location evidence="3">Secreted</location>
    </subcellularLocation>
</comment>
<comment type="similarity">
    <text evidence="3">Belongs to the peptidase M20A family.</text>
</comment>
<organism>
    <name type="scientific">Dictyostelium discoideum</name>
    <name type="common">Social amoeba</name>
    <dbReference type="NCBI Taxonomy" id="44689"/>
    <lineage>
        <taxon>Eukaryota</taxon>
        <taxon>Amoebozoa</taxon>
        <taxon>Evosea</taxon>
        <taxon>Eumycetozoa</taxon>
        <taxon>Dictyostelia</taxon>
        <taxon>Dictyosteliales</taxon>
        <taxon>Dictyosteliaceae</taxon>
        <taxon>Dictyostelium</taxon>
    </lineage>
</organism>
<reference key="1">
    <citation type="journal article" date="2005" name="Nature">
        <title>The genome of the social amoeba Dictyostelium discoideum.</title>
        <authorList>
            <person name="Eichinger L."/>
            <person name="Pachebat J.A."/>
            <person name="Gloeckner G."/>
            <person name="Rajandream M.A."/>
            <person name="Sucgang R."/>
            <person name="Berriman M."/>
            <person name="Song J."/>
            <person name="Olsen R."/>
            <person name="Szafranski K."/>
            <person name="Xu Q."/>
            <person name="Tunggal B."/>
            <person name="Kummerfeld S."/>
            <person name="Madera M."/>
            <person name="Konfortov B.A."/>
            <person name="Rivero F."/>
            <person name="Bankier A.T."/>
            <person name="Lehmann R."/>
            <person name="Hamlin N."/>
            <person name="Davies R."/>
            <person name="Gaudet P."/>
            <person name="Fey P."/>
            <person name="Pilcher K."/>
            <person name="Chen G."/>
            <person name="Saunders D."/>
            <person name="Sodergren E.J."/>
            <person name="Davis P."/>
            <person name="Kerhornou A."/>
            <person name="Nie X."/>
            <person name="Hall N."/>
            <person name="Anjard C."/>
            <person name="Hemphill L."/>
            <person name="Bason N."/>
            <person name="Farbrother P."/>
            <person name="Desany B."/>
            <person name="Just E."/>
            <person name="Morio T."/>
            <person name="Rost R."/>
            <person name="Churcher C.M."/>
            <person name="Cooper J."/>
            <person name="Haydock S."/>
            <person name="van Driessche N."/>
            <person name="Cronin A."/>
            <person name="Goodhead I."/>
            <person name="Muzny D.M."/>
            <person name="Mourier T."/>
            <person name="Pain A."/>
            <person name="Lu M."/>
            <person name="Harper D."/>
            <person name="Lindsay R."/>
            <person name="Hauser H."/>
            <person name="James K.D."/>
            <person name="Quiles M."/>
            <person name="Madan Babu M."/>
            <person name="Saito T."/>
            <person name="Buchrieser C."/>
            <person name="Wardroper A."/>
            <person name="Felder M."/>
            <person name="Thangavelu M."/>
            <person name="Johnson D."/>
            <person name="Knights A."/>
            <person name="Loulseged H."/>
            <person name="Mungall K.L."/>
            <person name="Oliver K."/>
            <person name="Price C."/>
            <person name="Quail M.A."/>
            <person name="Urushihara H."/>
            <person name="Hernandez J."/>
            <person name="Rabbinowitsch E."/>
            <person name="Steffen D."/>
            <person name="Sanders M."/>
            <person name="Ma J."/>
            <person name="Kohara Y."/>
            <person name="Sharp S."/>
            <person name="Simmonds M.N."/>
            <person name="Spiegler S."/>
            <person name="Tivey A."/>
            <person name="Sugano S."/>
            <person name="White B."/>
            <person name="Walker D."/>
            <person name="Woodward J.R."/>
            <person name="Winckler T."/>
            <person name="Tanaka Y."/>
            <person name="Shaulsky G."/>
            <person name="Schleicher M."/>
            <person name="Weinstock G.M."/>
            <person name="Rosenthal A."/>
            <person name="Cox E.C."/>
            <person name="Chisholm R.L."/>
            <person name="Gibbs R.A."/>
            <person name="Loomis W.F."/>
            <person name="Platzer M."/>
            <person name="Kay R.R."/>
            <person name="Williams J.G."/>
            <person name="Dear P.H."/>
            <person name="Noegel A.A."/>
            <person name="Barrell B.G."/>
            <person name="Kuspa A."/>
        </authorList>
    </citation>
    <scope>NUCLEOTIDE SEQUENCE [LARGE SCALE GENOMIC DNA]</scope>
    <source>
        <strain>AX4</strain>
    </source>
</reference>
<keyword id="KW-0378">Hydrolase</keyword>
<keyword id="KW-0479">Metal-binding</keyword>
<keyword id="KW-0645">Protease</keyword>
<keyword id="KW-1185">Reference proteome</keyword>
<keyword id="KW-0964">Secreted</keyword>
<keyword id="KW-0732">Signal</keyword>
<keyword id="KW-0862">Zinc</keyword>
<proteinExistence type="inferred from homology"/>
<accession>Q55DL1</accession>
<feature type="signal peptide" evidence="2">
    <location>
        <begin position="1"/>
        <end position="21"/>
    </location>
</feature>
<feature type="chain" id="PRO_0000327533" description="Probable carboxypeptidase S-like 1">
    <location>
        <begin position="22"/>
        <end position="485"/>
    </location>
</feature>
<feature type="active site" evidence="1">
    <location>
        <position position="113"/>
    </location>
</feature>
<feature type="active site" description="Proton acceptor" evidence="1">
    <location>
        <position position="177"/>
    </location>
</feature>
<feature type="binding site" evidence="1">
    <location>
        <position position="111"/>
    </location>
    <ligand>
        <name>Zn(2+)</name>
        <dbReference type="ChEBI" id="CHEBI:29105"/>
        <label>2</label>
    </ligand>
</feature>
<feature type="binding site" evidence="1">
    <location>
        <position position="142"/>
    </location>
    <ligand>
        <name>Zn(2+)</name>
        <dbReference type="ChEBI" id="CHEBI:29105"/>
        <label>1</label>
    </ligand>
</feature>
<feature type="binding site" evidence="1">
    <location>
        <position position="142"/>
    </location>
    <ligand>
        <name>Zn(2+)</name>
        <dbReference type="ChEBI" id="CHEBI:29105"/>
        <label>2</label>
    </ligand>
</feature>
<feature type="binding site" evidence="1">
    <location>
        <position position="178"/>
    </location>
    <ligand>
        <name>Zn(2+)</name>
        <dbReference type="ChEBI" id="CHEBI:29105"/>
        <label>1</label>
    </ligand>
</feature>
<feature type="binding site" evidence="1">
    <location>
        <position position="204"/>
    </location>
    <ligand>
        <name>Zn(2+)</name>
        <dbReference type="ChEBI" id="CHEBI:29105"/>
        <label>2</label>
    </ligand>
</feature>
<feature type="binding site" evidence="1">
    <location>
        <position position="431"/>
    </location>
    <ligand>
        <name>Zn(2+)</name>
        <dbReference type="ChEBI" id="CHEBI:29105"/>
        <label>1</label>
    </ligand>
</feature>
<gene>
    <name type="ORF">DDB_G0270582</name>
</gene>
<dbReference type="EC" id="3.4.17.-"/>
<dbReference type="EMBL" id="AAFI02000005">
    <property type="protein sequence ID" value="EAL72641.1"/>
    <property type="molecule type" value="Genomic_DNA"/>
</dbReference>
<dbReference type="RefSeq" id="XP_646120.1">
    <property type="nucleotide sequence ID" value="XM_641028.1"/>
</dbReference>
<dbReference type="SMR" id="Q55DL1"/>
<dbReference type="STRING" id="44689.Q55DL1"/>
<dbReference type="PaxDb" id="44689-DDB0305000"/>
<dbReference type="EnsemblProtists" id="EAL72641">
    <property type="protein sequence ID" value="EAL72641"/>
    <property type="gene ID" value="DDB_G0270582"/>
</dbReference>
<dbReference type="GeneID" id="8617069"/>
<dbReference type="KEGG" id="ddi:DDB_G0270582"/>
<dbReference type="dictyBase" id="DDB_G0270582"/>
<dbReference type="VEuPathDB" id="AmoebaDB:DDB_G0270582"/>
<dbReference type="eggNOG" id="KOG2275">
    <property type="taxonomic scope" value="Eukaryota"/>
</dbReference>
<dbReference type="HOGENOM" id="CLU_021802_11_0_1"/>
<dbReference type="InParanoid" id="Q55DL1"/>
<dbReference type="OMA" id="WEAFGPF"/>
<dbReference type="PhylomeDB" id="Q55DL1"/>
<dbReference type="Reactome" id="R-DDI-9673163">
    <property type="pathway name" value="Oleoyl-phe metabolism"/>
</dbReference>
<dbReference type="PRO" id="PR:Q55DL1"/>
<dbReference type="Proteomes" id="UP000002195">
    <property type="component" value="Chromosome 1"/>
</dbReference>
<dbReference type="GO" id="GO:0005576">
    <property type="term" value="C:extracellular region"/>
    <property type="evidence" value="ECO:0007669"/>
    <property type="project" value="UniProtKB-SubCell"/>
</dbReference>
<dbReference type="GO" id="GO:0046872">
    <property type="term" value="F:metal ion binding"/>
    <property type="evidence" value="ECO:0007669"/>
    <property type="project" value="UniProtKB-KW"/>
</dbReference>
<dbReference type="GO" id="GO:0008233">
    <property type="term" value="F:peptidase activity"/>
    <property type="evidence" value="ECO:0007669"/>
    <property type="project" value="UniProtKB-KW"/>
</dbReference>
<dbReference type="GO" id="GO:0006508">
    <property type="term" value="P:proteolysis"/>
    <property type="evidence" value="ECO:0007669"/>
    <property type="project" value="UniProtKB-KW"/>
</dbReference>
<dbReference type="CDD" id="cd05674">
    <property type="entry name" value="M20_yscS"/>
    <property type="match status" value="1"/>
</dbReference>
<dbReference type="FunFam" id="1.10.150.900:FF:000003">
    <property type="entry name" value="N-fatty-acyl-amino acid synthase/hydrolase PM20D1"/>
    <property type="match status" value="1"/>
</dbReference>
<dbReference type="FunFam" id="3.40.630.10:FF:000027">
    <property type="entry name" value="N-fatty-acyl-amino acid synthase/hydrolase PM20D1"/>
    <property type="match status" value="1"/>
</dbReference>
<dbReference type="FunFam" id="3.30.70.360:FF:000039">
    <property type="entry name" value="Vacuolar carboxypeptidase Cps1, putative (AFU_orthologue AFUA_3G07040)"/>
    <property type="match status" value="1"/>
</dbReference>
<dbReference type="Gene3D" id="1.10.150.900">
    <property type="match status" value="1"/>
</dbReference>
<dbReference type="Gene3D" id="3.30.70.360">
    <property type="match status" value="1"/>
</dbReference>
<dbReference type="Gene3D" id="3.40.630.10">
    <property type="entry name" value="Zn peptidases"/>
    <property type="match status" value="1"/>
</dbReference>
<dbReference type="InterPro" id="IPR001261">
    <property type="entry name" value="ArgE/DapE_CS"/>
</dbReference>
<dbReference type="InterPro" id="IPR036264">
    <property type="entry name" value="Bact_exopeptidase_dim_dom"/>
</dbReference>
<dbReference type="InterPro" id="IPR047177">
    <property type="entry name" value="Pept_M20A"/>
</dbReference>
<dbReference type="InterPro" id="IPR002933">
    <property type="entry name" value="Peptidase_M20"/>
</dbReference>
<dbReference type="InterPro" id="IPR011650">
    <property type="entry name" value="Peptidase_M20_dimer"/>
</dbReference>
<dbReference type="PANTHER" id="PTHR45962">
    <property type="entry name" value="N-FATTY-ACYL-AMINO ACID SYNTHASE/HYDROLASE PM20D1"/>
    <property type="match status" value="1"/>
</dbReference>
<dbReference type="PANTHER" id="PTHR45962:SF1">
    <property type="entry name" value="N-FATTY-ACYL-AMINO ACID SYNTHASE_HYDROLASE PM20D1"/>
    <property type="match status" value="1"/>
</dbReference>
<dbReference type="Pfam" id="PF07687">
    <property type="entry name" value="M20_dimer"/>
    <property type="match status" value="1"/>
</dbReference>
<dbReference type="Pfam" id="PF01546">
    <property type="entry name" value="Peptidase_M20"/>
    <property type="match status" value="1"/>
</dbReference>
<dbReference type="SUPFAM" id="SSF55031">
    <property type="entry name" value="Bacterial exopeptidase dimerisation domain"/>
    <property type="match status" value="1"/>
</dbReference>
<dbReference type="SUPFAM" id="SSF53187">
    <property type="entry name" value="Zn-dependent exopeptidases"/>
    <property type="match status" value="1"/>
</dbReference>
<dbReference type="PROSITE" id="PS00758">
    <property type="entry name" value="ARGE_DAPE_CPG2_1"/>
    <property type="match status" value="1"/>
</dbReference>
<sequence length="485" mass="55597">MIFKFFFIFFLIILVIKISESVDSTVNVHLIKSRTELAYSFKESLSFKTISFDDESNKIDYDEFLKFHNFLQNKFPIIHRVLKRTVINKYSLLFEWTGSDKTLKPLLLNSHYDVVPVTESEWTFNPWGEIRNDNIYGRGSIDNKVIVMATMESIEAILANNYTQPIRTIYLCFGHDEELGGLNGHRMIARHFRENLVRAEAIFDEGCPFLASNFVPGFHDIIAGVGVFEKGYLFYKLTSKVNSFTHSAIPPKESAIGILSKALAKIESNPFAPIENIEKKNQLLQLFNGETIKSNPFLDAMTKTTTALSMIHAGTKPNIIPTTASAWVSHRIINGNSIEYVKSRILDLINDTRITMEIEGFLEPSPISSPFTTAYQILKQTIYQQFGGYNVKVVPTQLMANTDTRHYWDITDNIYRFMPIVGNFMDFVSIHGSNEKISIDDYIKTIHFYKKLILNFQPFSNSSNSNYINKNLKINDYCPNSIYSK</sequence>
<evidence type="ECO:0000250" key="1"/>
<evidence type="ECO:0000255" key="2"/>
<evidence type="ECO:0000305" key="3"/>
<protein>
    <recommendedName>
        <fullName>Probable carboxypeptidase S-like 1</fullName>
        <ecNumber>3.4.17.-</ecNumber>
    </recommendedName>
</protein>